<sequence>MAASRWLRAVLLFLCASDLLLLPPPNAYAADTPGEATPPPRKKKDIRDYNDADMARLLEQWEKDDDIEEGDLPEHKRPSAPIDFSKLDPGKPESILKMTKKGKTLMMFVTVSGNPTEKETEEITSLWQGSLFNANYDVQRFIVGSDRAIFMLRDGSYAWEIKDFLVSQDRCAEVTLEGQMYPGKGGGSKEKNKTKPEKAKKKEGDPKPRASKEDNRAGSRREDL</sequence>
<gene>
    <name evidence="12" type="primary">Mesd</name>
    <name type="synonym">Mesdc2</name>
</gene>
<accession>Q9ERE7</accession>
<accession>Q8C611</accession>
<accession>Q8CCX7</accession>
<accession>Q91WK8</accession>
<accession>Q9CVB9</accession>
<dbReference type="EMBL" id="AF311213">
    <property type="protein sequence ID" value="AAG33621.1"/>
    <property type="molecule type" value="Genomic_DNA"/>
</dbReference>
<dbReference type="EMBL" id="AK008735">
    <property type="protein sequence ID" value="BAB25865.1"/>
    <property type="molecule type" value="mRNA"/>
</dbReference>
<dbReference type="EMBL" id="AK031949">
    <property type="protein sequence ID" value="BAC27617.1"/>
    <property type="molecule type" value="mRNA"/>
</dbReference>
<dbReference type="EMBL" id="AK076760">
    <property type="protein sequence ID" value="BAC36471.1"/>
    <property type="molecule type" value="mRNA"/>
</dbReference>
<dbReference type="EMBL" id="AK076773">
    <property type="protein sequence ID" value="BAC36476.1"/>
    <property type="status" value="ALT_FRAME"/>
    <property type="molecule type" value="mRNA"/>
</dbReference>
<dbReference type="EMBL" id="BC014742">
    <property type="protein sequence ID" value="AAH14742.1"/>
    <property type="status" value="ALT_INIT"/>
    <property type="molecule type" value="mRNA"/>
</dbReference>
<dbReference type="CCDS" id="CCDS21415.1"/>
<dbReference type="RefSeq" id="NP_075892.3">
    <property type="nucleotide sequence ID" value="NM_023403.3"/>
</dbReference>
<dbReference type="PDB" id="2I9S">
    <property type="method" value="NMR"/>
    <property type="chains" value="A=89-184"/>
</dbReference>
<dbReference type="PDB" id="2KGL">
    <property type="method" value="NMR"/>
    <property type="chains" value="A=30-224"/>
</dbReference>
<dbReference type="PDB" id="2KMI">
    <property type="method" value="NMR"/>
    <property type="chains" value="A=41-185"/>
</dbReference>
<dbReference type="PDB" id="2RQK">
    <property type="method" value="NMR"/>
    <property type="chains" value="A=45-184"/>
</dbReference>
<dbReference type="PDB" id="2RQM">
    <property type="method" value="NMR"/>
    <property type="chains" value="A=45-184"/>
</dbReference>
<dbReference type="PDB" id="3OFH">
    <property type="method" value="X-ray"/>
    <property type="resolution" value="2.01 A"/>
    <property type="chains" value="A/B=98-183"/>
</dbReference>
<dbReference type="PDBsum" id="2I9S"/>
<dbReference type="PDBsum" id="2KGL"/>
<dbReference type="PDBsum" id="2KMI"/>
<dbReference type="PDBsum" id="2RQK"/>
<dbReference type="PDBsum" id="2RQM"/>
<dbReference type="PDBsum" id="3OFH"/>
<dbReference type="BMRB" id="Q9ERE7"/>
<dbReference type="SMR" id="Q9ERE7"/>
<dbReference type="BioGRID" id="212555">
    <property type="interactions" value="13"/>
</dbReference>
<dbReference type="DIP" id="DIP-59114N"/>
<dbReference type="FunCoup" id="Q9ERE7">
    <property type="interactions" value="3323"/>
</dbReference>
<dbReference type="IntAct" id="Q9ERE7">
    <property type="interactions" value="5"/>
</dbReference>
<dbReference type="MINT" id="Q9ERE7"/>
<dbReference type="STRING" id="10090.ENSMUSP00000091768"/>
<dbReference type="GlyCosmos" id="Q9ERE7">
    <property type="glycosylation" value="1 site, No reported glycans"/>
</dbReference>
<dbReference type="GlyGen" id="Q9ERE7">
    <property type="glycosylation" value="2 sites"/>
</dbReference>
<dbReference type="iPTMnet" id="Q9ERE7"/>
<dbReference type="PhosphoSitePlus" id="Q9ERE7"/>
<dbReference type="SwissPalm" id="Q9ERE7"/>
<dbReference type="REPRODUCTION-2DPAGE" id="IPI00349285"/>
<dbReference type="REPRODUCTION-2DPAGE" id="Q9ERE7"/>
<dbReference type="jPOST" id="Q9ERE7"/>
<dbReference type="PaxDb" id="10090-ENSMUSP00000091768"/>
<dbReference type="PeptideAtlas" id="Q9ERE7"/>
<dbReference type="ProteomicsDB" id="292219"/>
<dbReference type="Pumba" id="Q9ERE7"/>
<dbReference type="ABCD" id="Q9ERE7">
    <property type="antibodies" value="1 sequenced antibody"/>
</dbReference>
<dbReference type="Antibodypedia" id="27911">
    <property type="antibodies" value="182 antibodies from 35 providers"/>
</dbReference>
<dbReference type="DNASU" id="67943"/>
<dbReference type="Ensembl" id="ENSMUST00000094215.10">
    <property type="protein sequence ID" value="ENSMUSP00000091768.4"/>
    <property type="gene ID" value="ENSMUSG00000038503.16"/>
</dbReference>
<dbReference type="GeneID" id="67943"/>
<dbReference type="KEGG" id="mmu:67943"/>
<dbReference type="UCSC" id="uc009idx.2">
    <property type="organism name" value="mouse"/>
</dbReference>
<dbReference type="AGR" id="MGI:1891421"/>
<dbReference type="CTD" id="23184"/>
<dbReference type="MGI" id="MGI:1891421">
    <property type="gene designation" value="Mesd"/>
</dbReference>
<dbReference type="VEuPathDB" id="HostDB:ENSMUSG00000038503"/>
<dbReference type="eggNOG" id="KOG4357">
    <property type="taxonomic scope" value="Eukaryota"/>
</dbReference>
<dbReference type="GeneTree" id="ENSGT00390000000993"/>
<dbReference type="HOGENOM" id="CLU_111621_0_0_1"/>
<dbReference type="InParanoid" id="Q9ERE7"/>
<dbReference type="OMA" id="QQRCADV"/>
<dbReference type="OrthoDB" id="75833at2759"/>
<dbReference type="PhylomeDB" id="Q9ERE7"/>
<dbReference type="TreeFam" id="TF315614"/>
<dbReference type="BioGRID-ORCS" id="67943">
    <property type="hits" value="17 hits in 78 CRISPR screens"/>
</dbReference>
<dbReference type="ChiTaRS" id="Mesd">
    <property type="organism name" value="mouse"/>
</dbReference>
<dbReference type="EvolutionaryTrace" id="Q9ERE7"/>
<dbReference type="PRO" id="PR:Q9ERE7"/>
<dbReference type="Proteomes" id="UP000000589">
    <property type="component" value="Chromosome 7"/>
</dbReference>
<dbReference type="RNAct" id="Q9ERE7">
    <property type="molecule type" value="protein"/>
</dbReference>
<dbReference type="Bgee" id="ENSMUSG00000038503">
    <property type="expression patterns" value="Expressed in saccule of membranous labyrinth and 264 other cell types or tissues"/>
</dbReference>
<dbReference type="ExpressionAtlas" id="Q9ERE7">
    <property type="expression patterns" value="baseline and differential"/>
</dbReference>
<dbReference type="GO" id="GO:0005783">
    <property type="term" value="C:endoplasmic reticulum"/>
    <property type="evidence" value="ECO:0000314"/>
    <property type="project" value="UniProtKB"/>
</dbReference>
<dbReference type="GO" id="GO:0005886">
    <property type="term" value="C:plasma membrane"/>
    <property type="evidence" value="ECO:0000314"/>
    <property type="project" value="MGI"/>
</dbReference>
<dbReference type="GO" id="GO:0042802">
    <property type="term" value="F:identical protein binding"/>
    <property type="evidence" value="ECO:0000353"/>
    <property type="project" value="IntAct"/>
</dbReference>
<dbReference type="GO" id="GO:0050750">
    <property type="term" value="F:low-density lipoprotein particle receptor binding"/>
    <property type="evidence" value="ECO:0000353"/>
    <property type="project" value="MGI"/>
</dbReference>
<dbReference type="GO" id="GO:0044183">
    <property type="term" value="F:protein folding chaperone"/>
    <property type="evidence" value="ECO:0000314"/>
    <property type="project" value="UniProtKB"/>
</dbReference>
<dbReference type="GO" id="GO:0007498">
    <property type="term" value="P:mesoderm development"/>
    <property type="evidence" value="ECO:0000303"/>
    <property type="project" value="UniProtKB"/>
</dbReference>
<dbReference type="GO" id="GO:0001503">
    <property type="term" value="P:ossification"/>
    <property type="evidence" value="ECO:0000250"/>
    <property type="project" value="UniProtKB"/>
</dbReference>
<dbReference type="GO" id="GO:0006909">
    <property type="term" value="P:phagocytosis"/>
    <property type="evidence" value="ECO:0000315"/>
    <property type="project" value="UniProtKB"/>
</dbReference>
<dbReference type="GO" id="GO:1904395">
    <property type="term" value="P:positive regulation of skeletal muscle acetylcholine-gated channel clustering"/>
    <property type="evidence" value="ECO:0000315"/>
    <property type="project" value="UniProtKB"/>
</dbReference>
<dbReference type="GO" id="GO:0030177">
    <property type="term" value="P:positive regulation of Wnt signaling pathway"/>
    <property type="evidence" value="ECO:0000314"/>
    <property type="project" value="UniProtKB"/>
</dbReference>
<dbReference type="GO" id="GO:0006457">
    <property type="term" value="P:protein folding"/>
    <property type="evidence" value="ECO:0000314"/>
    <property type="project" value="UniProtKB"/>
</dbReference>
<dbReference type="GO" id="GO:0034394">
    <property type="term" value="P:protein localization to cell surface"/>
    <property type="evidence" value="ECO:0000314"/>
    <property type="project" value="MGI"/>
</dbReference>
<dbReference type="GO" id="GO:0072659">
    <property type="term" value="P:protein localization to plasma membrane"/>
    <property type="evidence" value="ECO:0000314"/>
    <property type="project" value="UniProtKB"/>
</dbReference>
<dbReference type="GO" id="GO:0016055">
    <property type="term" value="P:Wnt signaling pathway"/>
    <property type="evidence" value="ECO:0007669"/>
    <property type="project" value="UniProtKB-KW"/>
</dbReference>
<dbReference type="DisProt" id="DP02314"/>
<dbReference type="FunFam" id="3.30.70.260:FF:000031">
    <property type="entry name" value="LDLR chaperone MESD"/>
    <property type="match status" value="1"/>
</dbReference>
<dbReference type="Gene3D" id="3.30.70.260">
    <property type="match status" value="1"/>
</dbReference>
<dbReference type="Gene3D" id="6.10.250.640">
    <property type="match status" value="1"/>
</dbReference>
<dbReference type="InterPro" id="IPR019330">
    <property type="entry name" value="MESD"/>
</dbReference>
<dbReference type="PANTHER" id="PTHR17600:SF2">
    <property type="entry name" value="LRP CHAPERONE MESD"/>
    <property type="match status" value="1"/>
</dbReference>
<dbReference type="PANTHER" id="PTHR17600">
    <property type="entry name" value="MESODERM DEVELOPMENT CANDIDATE 2"/>
    <property type="match status" value="1"/>
</dbReference>
<dbReference type="Pfam" id="PF10185">
    <property type="entry name" value="Mesd"/>
    <property type="match status" value="1"/>
</dbReference>
<organism>
    <name type="scientific">Mus musculus</name>
    <name type="common">Mouse</name>
    <dbReference type="NCBI Taxonomy" id="10090"/>
    <lineage>
        <taxon>Eukaryota</taxon>
        <taxon>Metazoa</taxon>
        <taxon>Chordata</taxon>
        <taxon>Craniata</taxon>
        <taxon>Vertebrata</taxon>
        <taxon>Euteleostomi</taxon>
        <taxon>Mammalia</taxon>
        <taxon>Eutheria</taxon>
        <taxon>Euarchontoglires</taxon>
        <taxon>Glires</taxon>
        <taxon>Rodentia</taxon>
        <taxon>Myomorpha</taxon>
        <taxon>Muroidea</taxon>
        <taxon>Muridae</taxon>
        <taxon>Murinae</taxon>
        <taxon>Mus</taxon>
        <taxon>Mus</taxon>
    </lineage>
</organism>
<keyword id="KW-0002">3D-structure</keyword>
<keyword id="KW-0143">Chaperone</keyword>
<keyword id="KW-0256">Endoplasmic reticulum</keyword>
<keyword id="KW-0325">Glycoprotein</keyword>
<keyword id="KW-1185">Reference proteome</keyword>
<keyword id="KW-0732">Signal</keyword>
<keyword id="KW-0879">Wnt signaling pathway</keyword>
<proteinExistence type="evidence at protein level"/>
<evidence type="ECO:0000255" key="1"/>
<evidence type="ECO:0000256" key="2">
    <source>
        <dbReference type="SAM" id="MobiDB-lite"/>
    </source>
</evidence>
<evidence type="ECO:0000269" key="3">
    <source>
    </source>
</evidence>
<evidence type="ECO:0000269" key="4">
    <source>
    </source>
</evidence>
<evidence type="ECO:0000269" key="5">
    <source>
    </source>
</evidence>
<evidence type="ECO:0000269" key="6">
    <source>
    </source>
</evidence>
<evidence type="ECO:0000269" key="7">
    <source>
    </source>
</evidence>
<evidence type="ECO:0000269" key="8">
    <source>
    </source>
</evidence>
<evidence type="ECO:0000269" key="9">
    <source>
    </source>
</evidence>
<evidence type="ECO:0000269" key="10">
    <source>
    </source>
</evidence>
<evidence type="ECO:0000305" key="11"/>
<evidence type="ECO:0000312" key="12">
    <source>
        <dbReference type="MGI" id="MGI:1891421"/>
    </source>
</evidence>
<evidence type="ECO:0007829" key="13">
    <source>
        <dbReference type="PDB" id="2I9S"/>
    </source>
</evidence>
<evidence type="ECO:0007829" key="14">
    <source>
        <dbReference type="PDB" id="2KGL"/>
    </source>
</evidence>
<evidence type="ECO:0007829" key="15">
    <source>
        <dbReference type="PDB" id="2RQK"/>
    </source>
</evidence>
<evidence type="ECO:0007829" key="16">
    <source>
        <dbReference type="PDB" id="3OFH"/>
    </source>
</evidence>
<name>MESD_MOUSE</name>
<feature type="signal peptide" evidence="1">
    <location>
        <begin position="1"/>
        <end position="29"/>
    </location>
</feature>
<feature type="chain" id="PRO_0000096444" description="LRP chaperone MESD">
    <location>
        <begin position="30"/>
        <end position="224"/>
    </location>
</feature>
<feature type="region of interest" description="Chaperone domain" evidence="6">
    <location>
        <begin position="1"/>
        <end position="155"/>
    </location>
</feature>
<feature type="region of interest" description="Disordered" evidence="2">
    <location>
        <begin position="28"/>
        <end position="49"/>
    </location>
</feature>
<feature type="region of interest" description="Escort domain" evidence="6">
    <location>
        <begin position="156"/>
        <end position="195"/>
    </location>
</feature>
<feature type="region of interest" description="Disordered" evidence="2">
    <location>
        <begin position="178"/>
        <end position="224"/>
    </location>
</feature>
<feature type="short sequence motif" description="Prevents secretion from ER">
    <location>
        <begin position="221"/>
        <end position="224"/>
    </location>
</feature>
<feature type="compositionally biased region" description="Basic and acidic residues" evidence="2">
    <location>
        <begin position="187"/>
        <end position="224"/>
    </location>
</feature>
<feature type="glycosylation site" description="N-linked (GlcNAc...) asparagine" evidence="1">
    <location>
        <position position="192"/>
    </location>
</feature>
<feature type="sequence conflict" description="In Ref. 2; BAC36471." evidence="11" ref="2">
    <original>P</original>
    <variation>R</variation>
    <location>
        <position position="206"/>
    </location>
</feature>
<feature type="turn" evidence="14">
    <location>
        <begin position="43"/>
        <end position="45"/>
    </location>
</feature>
<feature type="helix" evidence="14">
    <location>
        <begin position="47"/>
        <end position="49"/>
    </location>
</feature>
<feature type="helix" evidence="14">
    <location>
        <begin position="51"/>
        <end position="65"/>
    </location>
</feature>
<feature type="strand" evidence="14">
    <location>
        <begin position="87"/>
        <end position="90"/>
    </location>
</feature>
<feature type="helix" evidence="13">
    <location>
        <begin position="93"/>
        <end position="99"/>
    </location>
</feature>
<feature type="strand" evidence="16">
    <location>
        <begin position="105"/>
        <end position="113"/>
    </location>
</feature>
<feature type="helix" evidence="16">
    <location>
        <begin position="117"/>
        <end position="133"/>
    </location>
</feature>
<feature type="strand" evidence="16">
    <location>
        <begin position="138"/>
        <end position="142"/>
    </location>
</feature>
<feature type="strand" evidence="16">
    <location>
        <begin position="147"/>
        <end position="153"/>
    </location>
</feature>
<feature type="helix" evidence="16">
    <location>
        <begin position="155"/>
        <end position="157"/>
    </location>
</feature>
<feature type="helix" evidence="16">
    <location>
        <begin position="158"/>
        <end position="166"/>
    </location>
</feature>
<feature type="strand" evidence="15">
    <location>
        <begin position="168"/>
        <end position="170"/>
    </location>
</feature>
<feature type="strand" evidence="16">
    <location>
        <begin position="171"/>
        <end position="176"/>
    </location>
</feature>
<feature type="strand" evidence="16">
    <location>
        <begin position="179"/>
        <end position="181"/>
    </location>
</feature>
<feature type="strand" evidence="14">
    <location>
        <begin position="183"/>
        <end position="186"/>
    </location>
</feature>
<feature type="helix" evidence="14">
    <location>
        <begin position="195"/>
        <end position="203"/>
    </location>
</feature>
<feature type="strand" evidence="14">
    <location>
        <begin position="208"/>
        <end position="210"/>
    </location>
</feature>
<feature type="helix" evidence="14">
    <location>
        <begin position="211"/>
        <end position="217"/>
    </location>
</feature>
<reference key="1">
    <citation type="journal article" date="2001" name="Genomics">
        <title>Identification of mesoderm development (mesd) candidate genes by comparative mapping and genome sequence analysis.</title>
        <authorList>
            <person name="Wines M.E."/>
            <person name="Lee L."/>
            <person name="Katari M.S."/>
            <person name="Zhang L."/>
            <person name="DeRossi C."/>
            <person name="Shi Y."/>
            <person name="Perkins S."/>
            <person name="Feldman M."/>
            <person name="McCombie W.R."/>
            <person name="Holdener B.C."/>
        </authorList>
    </citation>
    <scope>NUCLEOTIDE SEQUENCE [GENOMIC DNA]</scope>
    <scope>TISSUE SPECIFICITY</scope>
    <source>
        <strain>129/SvJ</strain>
    </source>
</reference>
<reference key="2">
    <citation type="journal article" date="2005" name="Science">
        <title>The transcriptional landscape of the mammalian genome.</title>
        <authorList>
            <person name="Carninci P."/>
            <person name="Kasukawa T."/>
            <person name="Katayama S."/>
            <person name="Gough J."/>
            <person name="Frith M.C."/>
            <person name="Maeda N."/>
            <person name="Oyama R."/>
            <person name="Ravasi T."/>
            <person name="Lenhard B."/>
            <person name="Wells C."/>
            <person name="Kodzius R."/>
            <person name="Shimokawa K."/>
            <person name="Bajic V.B."/>
            <person name="Brenner S.E."/>
            <person name="Batalov S."/>
            <person name="Forrest A.R."/>
            <person name="Zavolan M."/>
            <person name="Davis M.J."/>
            <person name="Wilming L.G."/>
            <person name="Aidinis V."/>
            <person name="Allen J.E."/>
            <person name="Ambesi-Impiombato A."/>
            <person name="Apweiler R."/>
            <person name="Aturaliya R.N."/>
            <person name="Bailey T.L."/>
            <person name="Bansal M."/>
            <person name="Baxter L."/>
            <person name="Beisel K.W."/>
            <person name="Bersano T."/>
            <person name="Bono H."/>
            <person name="Chalk A.M."/>
            <person name="Chiu K.P."/>
            <person name="Choudhary V."/>
            <person name="Christoffels A."/>
            <person name="Clutterbuck D.R."/>
            <person name="Crowe M.L."/>
            <person name="Dalla E."/>
            <person name="Dalrymple B.P."/>
            <person name="de Bono B."/>
            <person name="Della Gatta G."/>
            <person name="di Bernardo D."/>
            <person name="Down T."/>
            <person name="Engstrom P."/>
            <person name="Fagiolini M."/>
            <person name="Faulkner G."/>
            <person name="Fletcher C.F."/>
            <person name="Fukushima T."/>
            <person name="Furuno M."/>
            <person name="Futaki S."/>
            <person name="Gariboldi M."/>
            <person name="Georgii-Hemming P."/>
            <person name="Gingeras T.R."/>
            <person name="Gojobori T."/>
            <person name="Green R.E."/>
            <person name="Gustincich S."/>
            <person name="Harbers M."/>
            <person name="Hayashi Y."/>
            <person name="Hensch T.K."/>
            <person name="Hirokawa N."/>
            <person name="Hill D."/>
            <person name="Huminiecki L."/>
            <person name="Iacono M."/>
            <person name="Ikeo K."/>
            <person name="Iwama A."/>
            <person name="Ishikawa T."/>
            <person name="Jakt M."/>
            <person name="Kanapin A."/>
            <person name="Katoh M."/>
            <person name="Kawasawa Y."/>
            <person name="Kelso J."/>
            <person name="Kitamura H."/>
            <person name="Kitano H."/>
            <person name="Kollias G."/>
            <person name="Krishnan S.P."/>
            <person name="Kruger A."/>
            <person name="Kummerfeld S.K."/>
            <person name="Kurochkin I.V."/>
            <person name="Lareau L.F."/>
            <person name="Lazarevic D."/>
            <person name="Lipovich L."/>
            <person name="Liu J."/>
            <person name="Liuni S."/>
            <person name="McWilliam S."/>
            <person name="Madan Babu M."/>
            <person name="Madera M."/>
            <person name="Marchionni L."/>
            <person name="Matsuda H."/>
            <person name="Matsuzawa S."/>
            <person name="Miki H."/>
            <person name="Mignone F."/>
            <person name="Miyake S."/>
            <person name="Morris K."/>
            <person name="Mottagui-Tabar S."/>
            <person name="Mulder N."/>
            <person name="Nakano N."/>
            <person name="Nakauchi H."/>
            <person name="Ng P."/>
            <person name="Nilsson R."/>
            <person name="Nishiguchi S."/>
            <person name="Nishikawa S."/>
            <person name="Nori F."/>
            <person name="Ohara O."/>
            <person name="Okazaki Y."/>
            <person name="Orlando V."/>
            <person name="Pang K.C."/>
            <person name="Pavan W.J."/>
            <person name="Pavesi G."/>
            <person name="Pesole G."/>
            <person name="Petrovsky N."/>
            <person name="Piazza S."/>
            <person name="Reed J."/>
            <person name="Reid J.F."/>
            <person name="Ring B.Z."/>
            <person name="Ringwald M."/>
            <person name="Rost B."/>
            <person name="Ruan Y."/>
            <person name="Salzberg S.L."/>
            <person name="Sandelin A."/>
            <person name="Schneider C."/>
            <person name="Schoenbach C."/>
            <person name="Sekiguchi K."/>
            <person name="Semple C.A."/>
            <person name="Seno S."/>
            <person name="Sessa L."/>
            <person name="Sheng Y."/>
            <person name="Shibata Y."/>
            <person name="Shimada H."/>
            <person name="Shimada K."/>
            <person name="Silva D."/>
            <person name="Sinclair B."/>
            <person name="Sperling S."/>
            <person name="Stupka E."/>
            <person name="Sugiura K."/>
            <person name="Sultana R."/>
            <person name="Takenaka Y."/>
            <person name="Taki K."/>
            <person name="Tammoja K."/>
            <person name="Tan S.L."/>
            <person name="Tang S."/>
            <person name="Taylor M.S."/>
            <person name="Tegner J."/>
            <person name="Teichmann S.A."/>
            <person name="Ueda H.R."/>
            <person name="van Nimwegen E."/>
            <person name="Verardo R."/>
            <person name="Wei C.L."/>
            <person name="Yagi K."/>
            <person name="Yamanishi H."/>
            <person name="Zabarovsky E."/>
            <person name="Zhu S."/>
            <person name="Zimmer A."/>
            <person name="Hide W."/>
            <person name="Bult C."/>
            <person name="Grimmond S.M."/>
            <person name="Teasdale R.D."/>
            <person name="Liu E.T."/>
            <person name="Brusic V."/>
            <person name="Quackenbush J."/>
            <person name="Wahlestedt C."/>
            <person name="Mattick J.S."/>
            <person name="Hume D.A."/>
            <person name="Kai C."/>
            <person name="Sasaki D."/>
            <person name="Tomaru Y."/>
            <person name="Fukuda S."/>
            <person name="Kanamori-Katayama M."/>
            <person name="Suzuki M."/>
            <person name="Aoki J."/>
            <person name="Arakawa T."/>
            <person name="Iida J."/>
            <person name="Imamura K."/>
            <person name="Itoh M."/>
            <person name="Kato T."/>
            <person name="Kawaji H."/>
            <person name="Kawagashira N."/>
            <person name="Kawashima T."/>
            <person name="Kojima M."/>
            <person name="Kondo S."/>
            <person name="Konno H."/>
            <person name="Nakano K."/>
            <person name="Ninomiya N."/>
            <person name="Nishio T."/>
            <person name="Okada M."/>
            <person name="Plessy C."/>
            <person name="Shibata K."/>
            <person name="Shiraki T."/>
            <person name="Suzuki S."/>
            <person name="Tagami M."/>
            <person name="Waki K."/>
            <person name="Watahiki A."/>
            <person name="Okamura-Oho Y."/>
            <person name="Suzuki H."/>
            <person name="Kawai J."/>
            <person name="Hayashizaki Y."/>
        </authorList>
    </citation>
    <scope>NUCLEOTIDE SEQUENCE [LARGE SCALE MRNA]</scope>
    <source>
        <strain>C57BL/6J</strain>
        <tissue>Medulla oblongata</tissue>
        <tissue>Stomach</tissue>
        <tissue>Testis</tissue>
    </source>
</reference>
<reference key="3">
    <citation type="journal article" date="2004" name="Genome Res.">
        <title>The status, quality, and expansion of the NIH full-length cDNA project: the Mammalian Gene Collection (MGC).</title>
        <authorList>
            <consortium name="The MGC Project Team"/>
        </authorList>
    </citation>
    <scope>NUCLEOTIDE SEQUENCE [LARGE SCALE MRNA]</scope>
    <source>
        <strain>FVB/N</strain>
        <tissue>Kidney</tissue>
    </source>
</reference>
<reference key="4">
    <citation type="journal article" date="2003" name="Cell">
        <title>Mesd encodes an LRP5/6 chaperone essential for specification of mouse embryonic polarity.</title>
        <authorList>
            <person name="Hsieh J.-C."/>
            <person name="Lee L."/>
            <person name="Zhang L."/>
            <person name="Wefer S."/>
            <person name="Brown K."/>
            <person name="DeRossi C."/>
            <person name="Wines M.E."/>
            <person name="Rosenquist T."/>
            <person name="Holdener B.C."/>
        </authorList>
    </citation>
    <scope>FUNCTION</scope>
    <scope>INTERACTION WITH LRP5 AND LRP6</scope>
    <scope>SUBCELLULAR LOCATION</scope>
    <scope>DISRUPTION PHENOTYPE</scope>
</reference>
<reference key="5">
    <citation type="journal article" date="2010" name="Cell">
        <title>A tissue-specific atlas of mouse protein phosphorylation and expression.</title>
        <authorList>
            <person name="Huttlin E.L."/>
            <person name="Jedrychowski M.P."/>
            <person name="Elias J.E."/>
            <person name="Goswami T."/>
            <person name="Rad R."/>
            <person name="Beausoleil S.A."/>
            <person name="Villen J."/>
            <person name="Haas W."/>
            <person name="Sowa M.E."/>
            <person name="Gygi S.P."/>
        </authorList>
    </citation>
    <scope>IDENTIFICATION BY MASS SPECTROMETRY [LARGE SCALE ANALYSIS]</scope>
    <source>
        <tissue>Brain</tissue>
        <tissue>Heart</tissue>
        <tissue>Kidney</tissue>
        <tissue>Liver</tissue>
        <tissue>Lung</tissue>
        <tissue>Pancreas</tissue>
        <tissue>Spleen</tissue>
        <tissue>Testis</tissue>
    </source>
</reference>
<reference key="6">
    <citation type="journal article" date="2006" name="J. Struct. Funct. Genomics">
        <title>The solution structure of the core of mesoderm development (MESD), a chaperone for members of the LDLR-family.</title>
        <authorList>
            <person name="Kohler C."/>
            <person name="Andersen O.M."/>
            <person name="Diehl A."/>
            <person name="Krause G."/>
            <person name="Schmieder P."/>
            <person name="Oschkinat H."/>
        </authorList>
    </citation>
    <scope>STRUCTURE BY NMR OF 89-184</scope>
    <scope>SUBUNIT</scope>
</reference>
<reference key="7">
    <citation type="journal article" date="2010" name="J. Biomol. NMR">
        <title>NMR structure note: solution structure of the core domain of MESD that is essential for proper folding of LRP5/6.</title>
        <authorList>
            <person name="Chen J."/>
            <person name="Li Q."/>
            <person name="Liu C.C."/>
            <person name="Zhou B."/>
            <person name="Bu G."/>
            <person name="Wang J."/>
        </authorList>
    </citation>
    <scope>STRUCTURE BY NMR OF 41-185</scope>
</reference>
<reference key="8">
    <citation type="journal article" date="2011" name="Structure">
        <title>Two structural and functional domains of MESD required for proper folding and trafficking of LRP5/6.</title>
        <authorList>
            <person name="Chen J."/>
            <person name="Liu C.C."/>
            <person name="Li Q."/>
            <person name="Nowak C."/>
            <person name="Bu G."/>
            <person name="Wang J."/>
        </authorList>
    </citation>
    <scope>STRUCTURE BY NMR OF 45-184</scope>
    <scope>FUNCTION</scope>
    <scope>DOMAINS CHAPERONE AND ESCORT</scope>
</reference>
<reference key="9">
    <citation type="journal article" date="2011" name="Structure">
        <title>Structural characterization of the Boca/Mesd maturation factors for LDL-receptor-type beta-propeller domains.</title>
        <authorList>
            <person name="Collins M.N."/>
            <person name="Hendrickson W.A."/>
        </authorList>
    </citation>
    <scope>X-RAY CRYSTALLOGRAPHY (2.01 ANGSTROMS) OF 98-183</scope>
    <scope>SUBUNIT</scope>
</reference>
<reference key="10">
    <citation type="journal article" date="2011" name="Structure">
        <title>The structure of MESD45-184 brings light into the mechanism of LDLR family folding.</title>
        <authorList>
            <person name="Koehler C."/>
            <person name="Lighthouse J.K."/>
            <person name="Werther T."/>
            <person name="Andersen O.M."/>
            <person name="Diehl A."/>
            <person name="Schmieder P."/>
            <person name="Du J."/>
            <person name="Holdener B.C."/>
            <person name="Oschkinat H."/>
        </authorList>
    </citation>
    <scope>STRUCTURE BY NMR OF 45-184</scope>
</reference>
<reference key="11">
    <citation type="journal article" date="2013" name="FEBS Lett.">
        <title>Mesdc2 plays a key role in cell-surface expression of Lrp4 and postsynaptic specialization in myotubes.</title>
        <authorList>
            <person name="Hoshi T."/>
            <person name="Tezuka T."/>
            <person name="Yokoyama K."/>
            <person name="Iemura S."/>
            <person name="Natsume T."/>
            <person name="Yamanashi Y."/>
        </authorList>
    </citation>
    <scope>INTERACTION WITH LRP4</scope>
    <scope>IDENTIFICATION BY MASS SPECTROMETRY</scope>
    <scope>FUNCTION</scope>
</reference>
<reference key="12">
    <citation type="journal article" date="2016" name="Cell Biol. Toxicol.">
        <title>Mesd extrinsically promotes phagocytosis by retinal pigment epithelial cells.</title>
        <authorList>
            <person name="Chen X."/>
            <person name="Guo F."/>
            <person name="LeBlanc M.E."/>
            <person name="Ding Y."/>
            <person name="Zhang C."/>
            <person name="Shakya A."/>
            <person name="Li W."/>
        </authorList>
    </citation>
    <scope>FUNCTION</scope>
    <scope>TISSUE SPECIFICITY</scope>
    <scope>SUBCELLULAR LOCATION</scope>
</reference>
<reference key="13">
    <citation type="journal article" date="2019" name="Am. J. Hum. Genet.">
        <title>Autosomal-recessive mutations in MESD cause osteogenesis imperfecta.</title>
        <authorList>
            <person name="Moosa S."/>
            <person name="Yamamoto G.L."/>
            <person name="Garbes L."/>
            <person name="Keupp K."/>
            <person name="Beleza-Meireles A."/>
            <person name="Moreno C.A."/>
            <person name="Valadares E.R."/>
            <person name="de Sousa S.B."/>
            <person name="Maia S."/>
            <person name="Saraiva J."/>
            <person name="Honjo R.S."/>
            <person name="Kim C.A."/>
            <person name="Cabral de Menezes H."/>
            <person name="Lausch E."/>
            <person name="Lorini P.V."/>
            <person name="Lamounier A. Jr."/>
            <person name="Carniero T.C.B."/>
            <person name="Giunta C."/>
            <person name="Rohrbach M."/>
            <person name="Janner M."/>
            <person name="Semler O."/>
            <person name="Beleggia F."/>
            <person name="Li Y."/>
            <person name="Yigit G."/>
            <person name="Reintjes N."/>
            <person name="Altmueller J."/>
            <person name="Nuernberg P."/>
            <person name="Cavalcanti D.P."/>
            <person name="Zabel B."/>
            <person name="Warman M.L."/>
            <person name="Bertola D.R."/>
            <person name="Wollnik B."/>
            <person name="Netzer C."/>
        </authorList>
    </citation>
    <scope>FUNCTION</scope>
</reference>
<comment type="function">
    <text evidence="4 6 8 9 10">Chaperone specifically assisting the folding of beta-propeller/EGF modules within the family of low-density lipoprotein receptors (LDLRs) (PubMed:31564437). Acts as a modulator of the Wnt pathway through chaperoning the coreceptors of the canonical Wnt pathway, LRP5 and LRP6, to the plasma membrane. Essential for specification of embryonic polarity and mesoderm induction (PubMed:12581525, PubMed:21397183). Plays an essential role in neuromuscular junction (NMJ) formation by promoting cell-surface expression of LRP4 (PubMed:24140340). May regulate phagocytosis of apoptotic retinal pigment epithelium (RPE) cells.</text>
</comment>
<comment type="subunit">
    <text evidence="4 5 7 8">Monomer. Interacts with LRP5; the interaction prevents LRP5 from forming aggregates and chaperones LRP6 to the plasma membrane. Interacts with LRP6; the interaction prevents LRP6 from forming aggregates and chaperones LRP6 to the plasma membrane. Interacts with LRP4; the interaction promotes glycosylation of LRP4 and its cell-surface expression (PubMed:24140340).</text>
</comment>
<comment type="interaction">
    <interactant intactId="EBI-6662606">
        <id>Q9ERE7</id>
    </interactant>
    <interactant intactId="EBI-2106160">
        <id>Q8VI56</id>
        <label>Lrp4</label>
    </interactant>
    <organismsDiffer>false</organismsDiffer>
    <experiments>2</experiments>
</comment>
<comment type="interaction">
    <interactant intactId="EBI-6662606">
        <id>Q9ERE7</id>
    </interactant>
    <interactant intactId="EBI-6662606">
        <id>Q9ERE7</id>
        <label>Mesd</label>
    </interactant>
    <organismsDiffer>false</organismsDiffer>
    <experiments>3</experiments>
</comment>
<comment type="interaction">
    <interactant intactId="EBI-6662606">
        <id>Q9ERE7</id>
    </interactant>
    <interactant intactId="EBI-910915">
        <id>O75581</id>
        <label>LRP6</label>
    </interactant>
    <organismsDiffer>true</organismsDiffer>
    <experiments>2</experiments>
</comment>
<comment type="subcellular location">
    <subcellularLocation>
        <location evidence="4">Endoplasmic reticulum</location>
    </subcellularLocation>
    <text evidence="9">Released from apoptotic cells and shed photoreceptor outer segments (PubMed:27184668).</text>
</comment>
<comment type="tissue specificity">
    <text evidence="3 9">Expressed in many tissues, but not in skeletal muscles (PubMed:11247670). In the retina expressed in retinal ganglion cells, inner and outer plexiform layers, photoreceptor inner and outer segments and retinal pigment epithelium (at protein level) (PubMed:27184668).</text>
</comment>
<comment type="domain">
    <text evidence="6">The chaperone domain provides a folding template for proper folding of the beta-propeller (BP) domains of LRP5/6.</text>
</comment>
<comment type="domain">
    <text evidence="6">The escort domain ensures LRP5/6 safe-trafficking from the ER to the Golgi by preventing premature ligand-binding.</text>
</comment>
<comment type="disruption phenotype">
    <text evidence="4">Disruption of embryonic polarity and mesoderm differentiation, likely resulting from a primary defect in Wnt signaling.</text>
</comment>
<comment type="similarity">
    <text evidence="11">Belongs to the MESD family.</text>
</comment>
<comment type="sequence caution" evidence="11">
    <conflict type="erroneous initiation">
        <sequence resource="EMBL-CDS" id="AAH14742"/>
    </conflict>
    <text>Truncated N-terminus.</text>
</comment>
<comment type="sequence caution" evidence="11">
    <conflict type="frameshift">
        <sequence resource="EMBL-CDS" id="BAC36476"/>
    </conflict>
</comment>
<protein>
    <recommendedName>
        <fullName evidence="11">LRP chaperone MESD</fullName>
    </recommendedName>
    <alternativeName>
        <fullName>LDLR chaperone MESD</fullName>
    </alternativeName>
    <alternativeName>
        <fullName>Mesoderm development candidate 2</fullName>
    </alternativeName>
    <alternativeName>
        <fullName>Mesoderm development protein</fullName>
    </alternativeName>
</protein>